<reference key="1">
    <citation type="journal article" date="2004" name="Nat. Biotechnol.">
        <title>The genome sequence of the anaerobic, sulfate-reducing bacterium Desulfovibrio vulgaris Hildenborough.</title>
        <authorList>
            <person name="Heidelberg J.F."/>
            <person name="Seshadri R."/>
            <person name="Haveman S.A."/>
            <person name="Hemme C.L."/>
            <person name="Paulsen I.T."/>
            <person name="Kolonay J.F."/>
            <person name="Eisen J.A."/>
            <person name="Ward N.L."/>
            <person name="Methe B.A."/>
            <person name="Brinkac L.M."/>
            <person name="Daugherty S.C."/>
            <person name="DeBoy R.T."/>
            <person name="Dodson R.J."/>
            <person name="Durkin A.S."/>
            <person name="Madupu R."/>
            <person name="Nelson W.C."/>
            <person name="Sullivan S.A."/>
            <person name="Fouts D.E."/>
            <person name="Haft D.H."/>
            <person name="Selengut J."/>
            <person name="Peterson J.D."/>
            <person name="Davidsen T.M."/>
            <person name="Zafar N."/>
            <person name="Zhou L."/>
            <person name="Radune D."/>
            <person name="Dimitrov G."/>
            <person name="Hance M."/>
            <person name="Tran K."/>
            <person name="Khouri H.M."/>
            <person name="Gill J."/>
            <person name="Utterback T.R."/>
            <person name="Feldblyum T.V."/>
            <person name="Wall J.D."/>
            <person name="Voordouw G."/>
            <person name="Fraser C.M."/>
        </authorList>
    </citation>
    <scope>NUCLEOTIDE SEQUENCE [LARGE SCALE GENOMIC DNA]</scope>
    <source>
        <strain>ATCC 29579 / DSM 644 / CCUG 34227 / NCIMB 8303 / VKM B-1760 / Hildenborough</strain>
    </source>
</reference>
<gene>
    <name evidence="1" type="primary">rpmC</name>
    <name type="ordered locus">DVU_1311</name>
</gene>
<dbReference type="EMBL" id="AE017285">
    <property type="protein sequence ID" value="AAS95789.1"/>
    <property type="molecule type" value="Genomic_DNA"/>
</dbReference>
<dbReference type="RefSeq" id="WP_010938606.1">
    <property type="nucleotide sequence ID" value="NC_002937.3"/>
</dbReference>
<dbReference type="RefSeq" id="YP_010530.1">
    <property type="nucleotide sequence ID" value="NC_002937.3"/>
</dbReference>
<dbReference type="SMR" id="Q72CH2"/>
<dbReference type="STRING" id="882.DVU_1311"/>
<dbReference type="PaxDb" id="882-DVU_1311"/>
<dbReference type="EnsemblBacteria" id="AAS95789">
    <property type="protein sequence ID" value="AAS95789"/>
    <property type="gene ID" value="DVU_1311"/>
</dbReference>
<dbReference type="KEGG" id="dvu:DVU_1311"/>
<dbReference type="PATRIC" id="fig|882.5.peg.1223"/>
<dbReference type="eggNOG" id="COG0255">
    <property type="taxonomic scope" value="Bacteria"/>
</dbReference>
<dbReference type="HOGENOM" id="CLU_158491_5_2_7"/>
<dbReference type="OrthoDB" id="9815192at2"/>
<dbReference type="PhylomeDB" id="Q72CH2"/>
<dbReference type="Proteomes" id="UP000002194">
    <property type="component" value="Chromosome"/>
</dbReference>
<dbReference type="GO" id="GO:0022625">
    <property type="term" value="C:cytosolic large ribosomal subunit"/>
    <property type="evidence" value="ECO:0007669"/>
    <property type="project" value="TreeGrafter"/>
</dbReference>
<dbReference type="GO" id="GO:0003735">
    <property type="term" value="F:structural constituent of ribosome"/>
    <property type="evidence" value="ECO:0007669"/>
    <property type="project" value="InterPro"/>
</dbReference>
<dbReference type="GO" id="GO:0006412">
    <property type="term" value="P:translation"/>
    <property type="evidence" value="ECO:0007669"/>
    <property type="project" value="UniProtKB-UniRule"/>
</dbReference>
<dbReference type="CDD" id="cd00427">
    <property type="entry name" value="Ribosomal_L29_HIP"/>
    <property type="match status" value="1"/>
</dbReference>
<dbReference type="FunFam" id="1.10.287.310:FF:000001">
    <property type="entry name" value="50S ribosomal protein L29"/>
    <property type="match status" value="1"/>
</dbReference>
<dbReference type="Gene3D" id="1.10.287.310">
    <property type="match status" value="1"/>
</dbReference>
<dbReference type="HAMAP" id="MF_00374">
    <property type="entry name" value="Ribosomal_uL29"/>
    <property type="match status" value="1"/>
</dbReference>
<dbReference type="InterPro" id="IPR050063">
    <property type="entry name" value="Ribosomal_protein_uL29"/>
</dbReference>
<dbReference type="InterPro" id="IPR001854">
    <property type="entry name" value="Ribosomal_uL29"/>
</dbReference>
<dbReference type="InterPro" id="IPR018254">
    <property type="entry name" value="Ribosomal_uL29_CS"/>
</dbReference>
<dbReference type="InterPro" id="IPR036049">
    <property type="entry name" value="Ribosomal_uL29_sf"/>
</dbReference>
<dbReference type="NCBIfam" id="TIGR00012">
    <property type="entry name" value="L29"/>
    <property type="match status" value="1"/>
</dbReference>
<dbReference type="PANTHER" id="PTHR10916">
    <property type="entry name" value="60S RIBOSOMAL PROTEIN L35/50S RIBOSOMAL PROTEIN L29"/>
    <property type="match status" value="1"/>
</dbReference>
<dbReference type="PANTHER" id="PTHR10916:SF0">
    <property type="entry name" value="LARGE RIBOSOMAL SUBUNIT PROTEIN UL29C"/>
    <property type="match status" value="1"/>
</dbReference>
<dbReference type="Pfam" id="PF00831">
    <property type="entry name" value="Ribosomal_L29"/>
    <property type="match status" value="1"/>
</dbReference>
<dbReference type="SUPFAM" id="SSF46561">
    <property type="entry name" value="Ribosomal protein L29 (L29p)"/>
    <property type="match status" value="1"/>
</dbReference>
<dbReference type="PROSITE" id="PS00579">
    <property type="entry name" value="RIBOSOMAL_L29"/>
    <property type="match status" value="1"/>
</dbReference>
<sequence length="61" mass="7114">MKAAELRKLTAEELKTKLVEQQQELFNLRFRHATAQLENTSSMGDARRTIARIQTILKEKE</sequence>
<name>RL29_NITV2</name>
<keyword id="KW-1185">Reference proteome</keyword>
<keyword id="KW-0687">Ribonucleoprotein</keyword>
<keyword id="KW-0689">Ribosomal protein</keyword>
<accession>Q72CH2</accession>
<organism>
    <name type="scientific">Nitratidesulfovibrio vulgaris (strain ATCC 29579 / DSM 644 / CCUG 34227 / NCIMB 8303 / VKM B-1760 / Hildenborough)</name>
    <name type="common">Desulfovibrio vulgaris</name>
    <dbReference type="NCBI Taxonomy" id="882"/>
    <lineage>
        <taxon>Bacteria</taxon>
        <taxon>Pseudomonadati</taxon>
        <taxon>Thermodesulfobacteriota</taxon>
        <taxon>Desulfovibrionia</taxon>
        <taxon>Desulfovibrionales</taxon>
        <taxon>Desulfovibrionaceae</taxon>
        <taxon>Nitratidesulfovibrio</taxon>
    </lineage>
</organism>
<proteinExistence type="inferred from homology"/>
<protein>
    <recommendedName>
        <fullName evidence="1">Large ribosomal subunit protein uL29</fullName>
    </recommendedName>
    <alternativeName>
        <fullName evidence="2">50S ribosomal protein L29</fullName>
    </alternativeName>
</protein>
<feature type="chain" id="PRO_1000007473" description="Large ribosomal subunit protein uL29">
    <location>
        <begin position="1"/>
        <end position="61"/>
    </location>
</feature>
<comment type="similarity">
    <text evidence="1">Belongs to the universal ribosomal protein uL29 family.</text>
</comment>
<evidence type="ECO:0000255" key="1">
    <source>
        <dbReference type="HAMAP-Rule" id="MF_00374"/>
    </source>
</evidence>
<evidence type="ECO:0000305" key="2"/>